<proteinExistence type="inferred from homology"/>
<accession>Q33C27</accession>
<sequence length="498" mass="53711">MRINPTTSGSEVSTLEKKKPGRVIQIIGPVLDVAFPPGKMPNIYNALVVQDRDSVGQPINVACEVQQLLGNNRVRAVAMSATDGLTRGMEVIDTGAPISVPVGGATLGRIFNVLGEPVDNLGPVDTNTTSPIHRSAPAFIQLDTKLSIFETGIKVVDLLAPYRRGGKIGLFGGAGVGKTVLIMELINNIAKAHGGVSVFGGVGERTREGNDLYMEMKESGVINEENIAESKVALVYGQMNEPPGARMRVGLTALTMAEYFRDVNEQDVLLFIDNIFRFVQAGSEVSALLGRMPSAVGYQPTLSTEMGSLQERITSTKEGSITSIQAVYVPADDLTDPAPATTFAHLDATTVLSRGLAAKGIYPAVDPLDSTSTMLQPRIVGEEHYETAQRVKQTLQRYKELQDIIAILGLDELSEEDRLLVARARKIERFLSQPFFVAEVFTGSPGKYVGLAETIRGFQLILSGELDGLPEQAFYLVGNIDEATAKAMNLEMESNLKK</sequence>
<evidence type="ECO:0000255" key="1">
    <source>
        <dbReference type="HAMAP-Rule" id="MF_01347"/>
    </source>
</evidence>
<organism>
    <name type="scientific">Nicotiana tomentosiformis</name>
    <name type="common">Tobacco</name>
    <dbReference type="NCBI Taxonomy" id="4098"/>
    <lineage>
        <taxon>Eukaryota</taxon>
        <taxon>Viridiplantae</taxon>
        <taxon>Streptophyta</taxon>
        <taxon>Embryophyta</taxon>
        <taxon>Tracheophyta</taxon>
        <taxon>Spermatophyta</taxon>
        <taxon>Magnoliopsida</taxon>
        <taxon>eudicotyledons</taxon>
        <taxon>Gunneridae</taxon>
        <taxon>Pentapetalae</taxon>
        <taxon>asterids</taxon>
        <taxon>lamiids</taxon>
        <taxon>Solanales</taxon>
        <taxon>Solanaceae</taxon>
        <taxon>Nicotianoideae</taxon>
        <taxon>Nicotianeae</taxon>
        <taxon>Nicotiana</taxon>
    </lineage>
</organism>
<geneLocation type="chloroplast"/>
<protein>
    <recommendedName>
        <fullName evidence="1">ATP synthase subunit beta, chloroplastic</fullName>
        <ecNumber evidence="1">7.1.2.2</ecNumber>
    </recommendedName>
    <alternativeName>
        <fullName evidence="1">ATP synthase F1 sector subunit beta</fullName>
    </alternativeName>
    <alternativeName>
        <fullName evidence="1">F-ATPase subunit beta</fullName>
    </alternativeName>
</protein>
<comment type="function">
    <text evidence="1">Produces ATP from ADP in the presence of a proton gradient across the membrane. The catalytic sites are hosted primarily by the beta subunits.</text>
</comment>
<comment type="catalytic activity">
    <reaction evidence="1">
        <text>ATP + H2O + 4 H(+)(in) = ADP + phosphate + 5 H(+)(out)</text>
        <dbReference type="Rhea" id="RHEA:57720"/>
        <dbReference type="ChEBI" id="CHEBI:15377"/>
        <dbReference type="ChEBI" id="CHEBI:15378"/>
        <dbReference type="ChEBI" id="CHEBI:30616"/>
        <dbReference type="ChEBI" id="CHEBI:43474"/>
        <dbReference type="ChEBI" id="CHEBI:456216"/>
        <dbReference type="EC" id="7.1.2.2"/>
    </reaction>
</comment>
<comment type="subunit">
    <text evidence="1">F-type ATPases have 2 components, CF(1) - the catalytic core - and CF(0) - the membrane proton channel. CF(1) has five subunits: alpha(3), beta(3), gamma(1), delta(1), epsilon(1). CF(0) has four main subunits: a(1), b(1), b'(1) and c(9-12).</text>
</comment>
<comment type="subcellular location">
    <subcellularLocation>
        <location evidence="1">Plastid</location>
        <location evidence="1">Chloroplast thylakoid membrane</location>
        <topology evidence="1">Peripheral membrane protein</topology>
    </subcellularLocation>
</comment>
<comment type="similarity">
    <text evidence="1">Belongs to the ATPase alpha/beta chains family.</text>
</comment>
<feature type="chain" id="PRO_0000254499" description="ATP synthase subunit beta, chloroplastic">
    <location>
        <begin position="1"/>
        <end position="498"/>
    </location>
</feature>
<feature type="binding site" evidence="1">
    <location>
        <begin position="172"/>
        <end position="179"/>
    </location>
    <ligand>
        <name>ATP</name>
        <dbReference type="ChEBI" id="CHEBI:30616"/>
    </ligand>
</feature>
<name>ATPB_NICTO</name>
<dbReference type="EC" id="7.1.2.2" evidence="1"/>
<dbReference type="EMBL" id="AB240139">
    <property type="protein sequence ID" value="BAE48008.1"/>
    <property type="molecule type" value="Genomic_DNA"/>
</dbReference>
<dbReference type="RefSeq" id="YP_398870.1">
    <property type="nucleotide sequence ID" value="NC_007602.1"/>
</dbReference>
<dbReference type="SMR" id="Q33C27"/>
<dbReference type="GeneID" id="3776338"/>
<dbReference type="KEGG" id="nto:3776338"/>
<dbReference type="OrthoDB" id="1217016at2759"/>
<dbReference type="GO" id="GO:0009535">
    <property type="term" value="C:chloroplast thylakoid membrane"/>
    <property type="evidence" value="ECO:0007669"/>
    <property type="project" value="UniProtKB-SubCell"/>
</dbReference>
<dbReference type="GO" id="GO:0005739">
    <property type="term" value="C:mitochondrion"/>
    <property type="evidence" value="ECO:0007669"/>
    <property type="project" value="GOC"/>
</dbReference>
<dbReference type="GO" id="GO:0045259">
    <property type="term" value="C:proton-transporting ATP synthase complex"/>
    <property type="evidence" value="ECO:0007669"/>
    <property type="project" value="UniProtKB-KW"/>
</dbReference>
<dbReference type="GO" id="GO:0005524">
    <property type="term" value="F:ATP binding"/>
    <property type="evidence" value="ECO:0007669"/>
    <property type="project" value="UniProtKB-UniRule"/>
</dbReference>
<dbReference type="GO" id="GO:0016887">
    <property type="term" value="F:ATP hydrolysis activity"/>
    <property type="evidence" value="ECO:0007669"/>
    <property type="project" value="InterPro"/>
</dbReference>
<dbReference type="GO" id="GO:0046933">
    <property type="term" value="F:proton-transporting ATP synthase activity, rotational mechanism"/>
    <property type="evidence" value="ECO:0007669"/>
    <property type="project" value="UniProtKB-UniRule"/>
</dbReference>
<dbReference type="GO" id="GO:0042776">
    <property type="term" value="P:proton motive force-driven mitochondrial ATP synthesis"/>
    <property type="evidence" value="ECO:0007669"/>
    <property type="project" value="TreeGrafter"/>
</dbReference>
<dbReference type="CDD" id="cd18110">
    <property type="entry name" value="ATP-synt_F1_beta_C"/>
    <property type="match status" value="1"/>
</dbReference>
<dbReference type="CDD" id="cd18115">
    <property type="entry name" value="ATP-synt_F1_beta_N"/>
    <property type="match status" value="1"/>
</dbReference>
<dbReference type="CDD" id="cd01133">
    <property type="entry name" value="F1-ATPase_beta_CD"/>
    <property type="match status" value="1"/>
</dbReference>
<dbReference type="FunFam" id="1.10.1140.10:FF:000001">
    <property type="entry name" value="ATP synthase subunit beta"/>
    <property type="match status" value="1"/>
</dbReference>
<dbReference type="FunFam" id="3.40.50.12240:FF:000006">
    <property type="entry name" value="ATP synthase subunit beta"/>
    <property type="match status" value="1"/>
</dbReference>
<dbReference type="FunFam" id="3.40.50.300:FF:000004">
    <property type="entry name" value="ATP synthase subunit beta"/>
    <property type="match status" value="1"/>
</dbReference>
<dbReference type="FunFam" id="2.40.10.170:FF:000002">
    <property type="entry name" value="ATP synthase subunit beta, chloroplastic"/>
    <property type="match status" value="1"/>
</dbReference>
<dbReference type="Gene3D" id="2.40.10.170">
    <property type="match status" value="1"/>
</dbReference>
<dbReference type="Gene3D" id="1.10.1140.10">
    <property type="entry name" value="Bovine Mitochondrial F1-atpase, Atp Synthase Beta Chain, Chain D, domain 3"/>
    <property type="match status" value="1"/>
</dbReference>
<dbReference type="Gene3D" id="3.40.50.300">
    <property type="entry name" value="P-loop containing nucleotide triphosphate hydrolases"/>
    <property type="match status" value="1"/>
</dbReference>
<dbReference type="HAMAP" id="MF_01347">
    <property type="entry name" value="ATP_synth_beta_bact"/>
    <property type="match status" value="1"/>
</dbReference>
<dbReference type="InterPro" id="IPR003593">
    <property type="entry name" value="AAA+_ATPase"/>
</dbReference>
<dbReference type="InterPro" id="IPR055190">
    <property type="entry name" value="ATP-synt_VA_C"/>
</dbReference>
<dbReference type="InterPro" id="IPR005722">
    <property type="entry name" value="ATP_synth_F1_bsu"/>
</dbReference>
<dbReference type="InterPro" id="IPR020003">
    <property type="entry name" value="ATPase_a/bsu_AS"/>
</dbReference>
<dbReference type="InterPro" id="IPR050053">
    <property type="entry name" value="ATPase_alpha/beta_chains"/>
</dbReference>
<dbReference type="InterPro" id="IPR004100">
    <property type="entry name" value="ATPase_F1/V1/A1_a/bsu_N"/>
</dbReference>
<dbReference type="InterPro" id="IPR036121">
    <property type="entry name" value="ATPase_F1/V1/A1_a/bsu_N_sf"/>
</dbReference>
<dbReference type="InterPro" id="IPR000194">
    <property type="entry name" value="ATPase_F1/V1/A1_a/bsu_nucl-bd"/>
</dbReference>
<dbReference type="InterPro" id="IPR024034">
    <property type="entry name" value="ATPase_F1/V1_b/a_C"/>
</dbReference>
<dbReference type="InterPro" id="IPR027417">
    <property type="entry name" value="P-loop_NTPase"/>
</dbReference>
<dbReference type="NCBIfam" id="TIGR01039">
    <property type="entry name" value="atpD"/>
    <property type="match status" value="1"/>
</dbReference>
<dbReference type="PANTHER" id="PTHR15184">
    <property type="entry name" value="ATP SYNTHASE"/>
    <property type="match status" value="1"/>
</dbReference>
<dbReference type="PANTHER" id="PTHR15184:SF71">
    <property type="entry name" value="ATP SYNTHASE SUBUNIT BETA, MITOCHONDRIAL"/>
    <property type="match status" value="1"/>
</dbReference>
<dbReference type="Pfam" id="PF00006">
    <property type="entry name" value="ATP-synt_ab"/>
    <property type="match status" value="1"/>
</dbReference>
<dbReference type="Pfam" id="PF02874">
    <property type="entry name" value="ATP-synt_ab_N"/>
    <property type="match status" value="1"/>
</dbReference>
<dbReference type="Pfam" id="PF22919">
    <property type="entry name" value="ATP-synt_VA_C"/>
    <property type="match status" value="1"/>
</dbReference>
<dbReference type="SMART" id="SM00382">
    <property type="entry name" value="AAA"/>
    <property type="match status" value="1"/>
</dbReference>
<dbReference type="SUPFAM" id="SSF47917">
    <property type="entry name" value="C-terminal domain of alpha and beta subunits of F1 ATP synthase"/>
    <property type="match status" value="1"/>
</dbReference>
<dbReference type="SUPFAM" id="SSF50615">
    <property type="entry name" value="N-terminal domain of alpha and beta subunits of F1 ATP synthase"/>
    <property type="match status" value="1"/>
</dbReference>
<dbReference type="SUPFAM" id="SSF52540">
    <property type="entry name" value="P-loop containing nucleoside triphosphate hydrolases"/>
    <property type="match status" value="1"/>
</dbReference>
<dbReference type="PROSITE" id="PS00152">
    <property type="entry name" value="ATPASE_ALPHA_BETA"/>
    <property type="match status" value="1"/>
</dbReference>
<keyword id="KW-0066">ATP synthesis</keyword>
<keyword id="KW-0067">ATP-binding</keyword>
<keyword id="KW-0139">CF(1)</keyword>
<keyword id="KW-0150">Chloroplast</keyword>
<keyword id="KW-0375">Hydrogen ion transport</keyword>
<keyword id="KW-0406">Ion transport</keyword>
<keyword id="KW-0472">Membrane</keyword>
<keyword id="KW-0547">Nucleotide-binding</keyword>
<keyword id="KW-0934">Plastid</keyword>
<keyword id="KW-0793">Thylakoid</keyword>
<keyword id="KW-1278">Translocase</keyword>
<keyword id="KW-0813">Transport</keyword>
<reference key="1">
    <citation type="journal article" date="2006" name="Mol. Genet. Genomics">
        <title>The chloroplast genome of Nicotiana sylvestris and Nicotiana tomentosiformis: complete sequencing confirms that the Nicotiana sylvestris progenitor is the maternal genome donor of Nicotiana tabacum.</title>
        <authorList>
            <person name="Yukawa M."/>
            <person name="Tsudzuki T."/>
            <person name="Sugiura M."/>
        </authorList>
    </citation>
    <scope>NUCLEOTIDE SEQUENCE [LARGE SCALE GENOMIC DNA]</scope>
</reference>
<gene>
    <name evidence="1" type="primary">atpB</name>
</gene>